<accession>Q6TUI4</accession>
<keyword id="KW-0067">ATP-binding</keyword>
<keyword id="KW-0963">Cytoplasm</keyword>
<keyword id="KW-0255">Endonuclease</keyword>
<keyword id="KW-0347">Helicase</keyword>
<keyword id="KW-0378">Hydrolase</keyword>
<keyword id="KW-0460">Magnesium</keyword>
<keyword id="KW-0464">Manganese</keyword>
<keyword id="KW-0479">Metal-binding</keyword>
<keyword id="KW-0540">Nuclease</keyword>
<keyword id="KW-0547">Nucleotide-binding</keyword>
<keyword id="KW-0597">Phosphoprotein</keyword>
<keyword id="KW-1185">Reference proteome</keyword>
<keyword id="KW-0677">Repeat</keyword>
<keyword id="KW-0694">RNA-binding</keyword>
<keyword id="KW-0943">RNA-mediated gene silencing</keyword>
<name>DICER_BOVIN</name>
<comment type="function">
    <text evidence="3">Double-stranded RNA (dsRNA) endoribonuclease playing a central role in short dsRNA-mediated post-transcriptional gene silencing. Cleaves naturally occurring long dsRNAs and short hairpin pre-microRNAs (miRNA) into fragments of twenty-one to twenty-three nucleotides with 3' overhang of two nucleotides, producing respectively short interfering RNAs (siRNA) and mature microRNAs. SiRNAs and miRNAs serve as guide to direct the RNA-induced silencing complex (RISC) to complementary RNAs to degrade them or prevent their translation. Gene silencing mediated by siRNAs, also called RNA interference, controls the elimination of transcripts from mobile and repetitive DNA elements of the genome but also the degradation of exogenous RNA of viral origin for instance. The miRNA pathway on the other side is a mean to specifically regulate the expression of target genes (By similarity).</text>
</comment>
<comment type="catalytic activity">
    <reaction>
        <text>Endonucleolytic cleavage to 5'-phosphomonoester.</text>
        <dbReference type="EC" id="3.1.26.3"/>
    </reaction>
</comment>
<comment type="cofactor">
    <cofactor evidence="1">
        <name>Mg(2+)</name>
        <dbReference type="ChEBI" id="CHEBI:18420"/>
    </cofactor>
    <cofactor evidence="1">
        <name>Mn(2+)</name>
        <dbReference type="ChEBI" id="CHEBI:29035"/>
    </cofactor>
    <text evidence="1">Binds 2 magnesium or manganese ions per subunit.</text>
</comment>
<comment type="subunit">
    <text evidence="3">Component of the RISC loading complex (RLC), or micro-RNA (miRNA) loading complex (miRLC), which is composed of DICER1, AGO2 and TARBP2; DICER1 and TARBP2 are required to process precursor miRNAs (pre-miRNAs) to mature miRNAs and then load them onto AGO2. Note that the trimeric RLC/miRLC is also referred to as RISC. Interacts with DHX9, AGO1, PIWIL1 and PRKRA. Interacts with AGO2, TARBP2, EIF6, MOV10 and RPL7A (60S ribosome subunit); they form a large RNA-induced silencing complex (RISC). Interacts with BCDIN3D (By similarity). Interacts (via Dicer dsRNA-binding fold domain) with ALOX5 (via PLAT domain); this interaction enhances arachidonate 5-lipoxygenase activity and modifies the miRNA precursor processing activity of DICER1 (By similarity).</text>
</comment>
<comment type="subcellular location">
    <subcellularLocation>
        <location evidence="3">Cytoplasm</location>
    </subcellularLocation>
</comment>
<comment type="similarity">
    <text evidence="9">Belongs to the helicase family. Dicer subfamily.</text>
</comment>
<comment type="caution">
    <text evidence="11">It is uncertain whether Met-1 or Met-11 is the initiator.</text>
</comment>
<protein>
    <recommendedName>
        <fullName>Endoribonuclease Dicer</fullName>
        <ecNumber>3.1.26.3</ecNumber>
    </recommendedName>
</protein>
<feature type="chain" id="PRO_0000373982" description="Endoribonuclease Dicer">
    <location>
        <begin position="1"/>
        <end position="1923"/>
    </location>
</feature>
<feature type="domain" description="Helicase ATP-binding" evidence="7">
    <location>
        <begin position="51"/>
        <end position="227"/>
    </location>
</feature>
<feature type="domain" description="Helicase C-terminal" evidence="8">
    <location>
        <begin position="433"/>
        <end position="602"/>
    </location>
</feature>
<feature type="domain" description="Dicer dsRNA-binding fold" evidence="9">
    <location>
        <begin position="629"/>
        <end position="721"/>
    </location>
</feature>
<feature type="domain" description="PAZ" evidence="4">
    <location>
        <begin position="894"/>
        <end position="1041"/>
    </location>
</feature>
<feature type="domain" description="RNase III 1" evidence="5">
    <location>
        <begin position="1276"/>
        <end position="1404"/>
    </location>
</feature>
<feature type="domain" description="RNase III 2" evidence="5">
    <location>
        <begin position="1667"/>
        <end position="1825"/>
    </location>
</feature>
<feature type="domain" description="DRBM" evidence="6">
    <location>
        <begin position="1853"/>
        <end position="1915"/>
    </location>
</feature>
<feature type="region of interest" description="Required for interaction with PRKRA and TARBP2" evidence="1">
    <location>
        <begin position="256"/>
        <end position="595"/>
    </location>
</feature>
<feature type="region of interest" description="Disordered" evidence="10">
    <location>
        <begin position="410"/>
        <end position="433"/>
    </location>
</feature>
<feature type="region of interest" description="Disordered" evidence="10">
    <location>
        <begin position="1246"/>
        <end position="1291"/>
    </location>
</feature>
<feature type="short sequence motif" description="DECH box">
    <location>
        <begin position="175"/>
        <end position="178"/>
    </location>
</feature>
<feature type="compositionally biased region" description="Acidic residues" evidence="10">
    <location>
        <begin position="414"/>
        <end position="425"/>
    </location>
</feature>
<feature type="compositionally biased region" description="Polar residues" evidence="10">
    <location>
        <begin position="1246"/>
        <end position="1255"/>
    </location>
</feature>
<feature type="compositionally biased region" description="Polar residues" evidence="10">
    <location>
        <begin position="1277"/>
        <end position="1290"/>
    </location>
</feature>
<feature type="binding site" evidence="7">
    <location>
        <begin position="64"/>
        <end position="71"/>
    </location>
    <ligand>
        <name>ATP</name>
        <dbReference type="ChEBI" id="CHEBI:30616"/>
    </ligand>
</feature>
<feature type="binding site" evidence="1">
    <location>
        <position position="1316"/>
    </location>
    <ligand>
        <name>Mg(2+)</name>
        <dbReference type="ChEBI" id="CHEBI:18420"/>
        <label>1</label>
    </ligand>
</feature>
<feature type="binding site" evidence="1">
    <location>
        <position position="1396"/>
    </location>
    <ligand>
        <name>Mg(2+)</name>
        <dbReference type="ChEBI" id="CHEBI:18420"/>
        <label>1</label>
    </ligand>
</feature>
<feature type="binding site" evidence="1">
    <location>
        <position position="1399"/>
    </location>
    <ligand>
        <name>Mg(2+)</name>
        <dbReference type="ChEBI" id="CHEBI:18420"/>
        <label>1</label>
    </ligand>
</feature>
<feature type="binding site" evidence="1">
    <location>
        <position position="1706"/>
    </location>
    <ligand>
        <name>Mg(2+)</name>
        <dbReference type="ChEBI" id="CHEBI:18420"/>
        <label>2</label>
    </ligand>
</feature>
<feature type="binding site" evidence="1">
    <location>
        <position position="1811"/>
    </location>
    <ligand>
        <name>Mg(2+)</name>
        <dbReference type="ChEBI" id="CHEBI:18420"/>
        <label>2</label>
    </ligand>
</feature>
<feature type="binding site" evidence="1">
    <location>
        <position position="1814"/>
    </location>
    <ligand>
        <name>Mg(2+)</name>
        <dbReference type="ChEBI" id="CHEBI:18420"/>
        <label>2</label>
    </ligand>
</feature>
<feature type="site" description="Important for activity" evidence="1">
    <location>
        <position position="1807"/>
    </location>
</feature>
<feature type="modified residue" description="Phosphoserine" evidence="3">
    <location>
        <position position="413"/>
    </location>
</feature>
<feature type="modified residue" description="Phosphoserine" evidence="3">
    <location>
        <position position="415"/>
    </location>
</feature>
<feature type="modified residue" description="Phosphoserine" evidence="3">
    <location>
        <position position="1015"/>
    </location>
</feature>
<feature type="modified residue" description="Phosphoserine" evidence="3">
    <location>
        <position position="1160"/>
    </location>
</feature>
<feature type="modified residue" description="Phosphoserine" evidence="3">
    <location>
        <position position="1461"/>
    </location>
</feature>
<feature type="modified residue" description="Phosphoserine" evidence="2">
    <location>
        <position position="1469"/>
    </location>
</feature>
<feature type="modified residue" description="Phosphoserine" evidence="3">
    <location>
        <position position="1471"/>
    </location>
</feature>
<feature type="modified residue" description="Phosphoserine" evidence="3">
    <location>
        <position position="1869"/>
    </location>
</feature>
<proteinExistence type="evidence at transcript level"/>
<sequence>MKSPALQPLSMAGLQLMTPASSPMGPFFGLPWQQEAIHDNIYTPRKYQVELLEAALDHNTIVCLNTGSGKTFIAVLLTKELSYQIRGDFNRNGKRTVFLVNSANQVAQQVSAVRTHSDLKVGEYSNLEVSASWTKEKWNQEFTKHQVLIMTCYVALNVLKNGYLSLSDINLLVFDECHLAILDHPYREIMKLCENCPSCPRILGLTASILNGKCDPEELEEKIQKLEKILKSNAETATDLVVLDRYTSQPCEIVVDCGPFTDRSGLYERLLMELEEALNFINDCNISVHSKERDSTLISKQILSDCRAVLVVLGPWCADKVAGMMVRELQKHIKHEQEELHRKFLLFTDTFLRKIHALCEEHFSPASLDLKFVTPKVIKLLEILRKYKPYERQQFESVEWYNNRNQDNYVSWSDSEDDEEDEEIEEKEKPETNFPSPFTNILCGIIFVERRYTAVVLNRLIKEAGKQDPELAYISSNFITGHGIGKNQPRNKQMEAEFRKQEEVLRKFRAHETNLLIATSIVEEGVDIPKCNLVVRFDLPTEYRSYVQSKGRARAPISNYVMLADTDKIKSFEEDLKTYKAIEKILRNKCSKSVDTGEADTEPVVDDDDVFPPYVLRPEDGPRVTINTAIGHVNRYCARLPSDPFTHLAPKCRTRELPDGTFYSTLYLPINSPLRASIVGPPMSCIRLAERVVALICCEKLHKIGELDDHLMPVGKETVKYEEELDLHDEEETSVPGRPGSTKRRQCYPKAIPECLRESYPRPGQPCYLYVIGMVLTTPLPDELNFRRRKLYPPEDTTRCFGILTAKPIPQIPHFPVYTRSGEVTISIELKKSGFTLSLQMLELITRLHQYIFSHILRLEKPALEFKPTDADSAYCVLPLNVVNDSSTLDIDFKFMEDIEKSEARIGIPSTKYSKETPFVFKLEDYQDAVIIPRYRNFDQPHRFYVADVYTDLTPLSKFPSPEYETFAEYYKTKYNLDLTNLNQPLLDVDHTSSRLNLLTPRHLNQKGKALPLSSAEKRKAKWESLQNKQILVPELCAIHPIPASLWRKAVCLPSILYRLHCLLTAEELRAQTASDAGVGVRSLPVDFRYPNLDFGWKKSIDSKSFISIANSSSAENENYCKHSTIVVPENAAHQGANRTSPLENHDQMSVNCRTLFSESPGKLQIEVSTDLTAINGLSYNKSLANGSYDLANRDFCQGNHLNYYKQEIPVQPTTSYPIQNLYNYENQPKPSDECTLLSNKYLDGNANTSTSDGSPVTAAVPGTTETGEAPPDRTASEQSPSPGYSSRTLGPNPGLILQALTLSNASDGFNLERLEMLGDSFLKHAITTVSLSALILDAHEGRLSYMRSKKVSNCNLYRLGKKKGLPSRMVVSIFDPPVNGLPPGYVVNQDKSNTEKWEKDEMTKDCMLANGKLDDDFEEEEEEEEDLMWRAHKEDADDEDDFLEYDQEHIKFIDNMLMGSGAFVKKISLSPFSATDSAYEWKMPKKSSLGSLPFSSDFEDFDYSSWDAMCYLDPSKAVEEDDFVVGFWNPSEENCGVDTGKQSISYDLHTEQCIADKSIADCVEALLGCYLTSCGERAAQLFLCSLGLKVLPVIKRTDREKAMCPTRENFTSQQKNLSGSRAAASGAGYRASVLKDLEYGCLKIPPRCMFDHPEADRTLRHLISGFENFEKKINYRFKNKAYLLQAFTHASYHYNTITDCYQRLEFLGDAILDYLITKHLYEDPRQHSPGVLTDLRSALVNNTIFASLAVKYDYHKYFKAVSPELFHVIDDFVQFQLEKNEMQGMDSELRRSEEDEEKEEDIEVPKAMGDIFESLAGAIYMDSGMSLETVWQVYYPMMRPLIEKFSANVPRSPVRELLEMEPEITKFSPAERTYDGKVRVTVEVVGKGKFKGVGRSYRIAKSAAARRALRSLKANQPQVPNS</sequence>
<dbReference type="EC" id="3.1.26.3"/>
<dbReference type="EMBL" id="AY386968">
    <property type="protein sequence ID" value="AAR26432.1"/>
    <property type="molecule type" value="mRNA"/>
</dbReference>
<dbReference type="RefSeq" id="NP_976235.1">
    <property type="nucleotide sequence ID" value="NM_203359.1"/>
</dbReference>
<dbReference type="SMR" id="Q6TUI4"/>
<dbReference type="FunCoup" id="Q6TUI4">
    <property type="interactions" value="2306"/>
</dbReference>
<dbReference type="STRING" id="9913.ENSBTAP00000017080"/>
<dbReference type="PaxDb" id="9913-ENSBTAP00000017080"/>
<dbReference type="GeneID" id="337871"/>
<dbReference type="KEGG" id="bta:337871"/>
<dbReference type="CTD" id="23405"/>
<dbReference type="eggNOG" id="KOG0701">
    <property type="taxonomic scope" value="Eukaryota"/>
</dbReference>
<dbReference type="InParanoid" id="Q6TUI4"/>
<dbReference type="OrthoDB" id="2392202at2759"/>
<dbReference type="Proteomes" id="UP000009136">
    <property type="component" value="Unplaced"/>
</dbReference>
<dbReference type="GO" id="GO:0005737">
    <property type="term" value="C:cytoplasm"/>
    <property type="evidence" value="ECO:0000318"/>
    <property type="project" value="GO_Central"/>
</dbReference>
<dbReference type="GO" id="GO:0005634">
    <property type="term" value="C:nucleus"/>
    <property type="evidence" value="ECO:0000318"/>
    <property type="project" value="GO_Central"/>
</dbReference>
<dbReference type="GO" id="GO:0048471">
    <property type="term" value="C:perinuclear region of cytoplasm"/>
    <property type="evidence" value="ECO:0000250"/>
    <property type="project" value="UniProtKB"/>
</dbReference>
<dbReference type="GO" id="GO:0016442">
    <property type="term" value="C:RISC complex"/>
    <property type="evidence" value="ECO:0000250"/>
    <property type="project" value="UniProtKB"/>
</dbReference>
<dbReference type="GO" id="GO:0070578">
    <property type="term" value="C:RISC-loading complex"/>
    <property type="evidence" value="ECO:0000250"/>
    <property type="project" value="UniProtKB"/>
</dbReference>
<dbReference type="GO" id="GO:0005524">
    <property type="term" value="F:ATP binding"/>
    <property type="evidence" value="ECO:0007669"/>
    <property type="project" value="UniProtKB-KW"/>
</dbReference>
<dbReference type="GO" id="GO:0004530">
    <property type="term" value="F:deoxyribonuclease I activity"/>
    <property type="evidence" value="ECO:0000318"/>
    <property type="project" value="GO_Central"/>
</dbReference>
<dbReference type="GO" id="GO:0004386">
    <property type="term" value="F:helicase activity"/>
    <property type="evidence" value="ECO:0007669"/>
    <property type="project" value="UniProtKB-KW"/>
</dbReference>
<dbReference type="GO" id="GO:0046872">
    <property type="term" value="F:metal ion binding"/>
    <property type="evidence" value="ECO:0007669"/>
    <property type="project" value="UniProtKB-KW"/>
</dbReference>
<dbReference type="GO" id="GO:0004525">
    <property type="term" value="F:ribonuclease III activity"/>
    <property type="evidence" value="ECO:0000318"/>
    <property type="project" value="GO_Central"/>
</dbReference>
<dbReference type="GO" id="GO:0003723">
    <property type="term" value="F:RNA binding"/>
    <property type="evidence" value="ECO:0000318"/>
    <property type="project" value="GO_Central"/>
</dbReference>
<dbReference type="GO" id="GO:0006309">
    <property type="term" value="P:apoptotic DNA fragmentation"/>
    <property type="evidence" value="ECO:0000318"/>
    <property type="project" value="GO_Central"/>
</dbReference>
<dbReference type="GO" id="GO:0098795">
    <property type="term" value="P:global gene silencing by mRNA cleavage"/>
    <property type="evidence" value="ECO:0000250"/>
    <property type="project" value="UniProtKB"/>
</dbReference>
<dbReference type="GO" id="GO:0031054">
    <property type="term" value="P:pre-miRNA processing"/>
    <property type="evidence" value="ECO:0000250"/>
    <property type="project" value="UniProtKB"/>
</dbReference>
<dbReference type="GO" id="GO:0030422">
    <property type="term" value="P:siRNA processing"/>
    <property type="evidence" value="ECO:0000250"/>
    <property type="project" value="UniProtKB"/>
</dbReference>
<dbReference type="CDD" id="cd18034">
    <property type="entry name" value="DEXHc_dicer"/>
    <property type="match status" value="1"/>
</dbReference>
<dbReference type="CDD" id="cd15903">
    <property type="entry name" value="Dicer_PBD"/>
    <property type="match status" value="1"/>
</dbReference>
<dbReference type="CDD" id="cd10843">
    <property type="entry name" value="DSRM_DICER"/>
    <property type="match status" value="1"/>
</dbReference>
<dbReference type="CDD" id="cd02843">
    <property type="entry name" value="PAZ_dicer_like"/>
    <property type="match status" value="1"/>
</dbReference>
<dbReference type="CDD" id="cd00593">
    <property type="entry name" value="RIBOc"/>
    <property type="match status" value="2"/>
</dbReference>
<dbReference type="CDD" id="cd18802">
    <property type="entry name" value="SF2_C_dicer"/>
    <property type="match status" value="1"/>
</dbReference>
<dbReference type="FunFam" id="3.40.50.300:FF:000628">
    <property type="entry name" value="Endoribonuclease Dicer"/>
    <property type="match status" value="1"/>
</dbReference>
<dbReference type="FunFam" id="3.30.160.20:FF:000015">
    <property type="entry name" value="endoribonuclease Dicer"/>
    <property type="match status" value="1"/>
</dbReference>
<dbReference type="FunFam" id="3.30.160.380:FF:000002">
    <property type="entry name" value="Endoribonuclease Dicer isoform 1"/>
    <property type="match status" value="1"/>
</dbReference>
<dbReference type="FunFam" id="3.40.50.300:FF:000588">
    <property type="entry name" value="Endoribonuclease Dicer isoform 1"/>
    <property type="match status" value="1"/>
</dbReference>
<dbReference type="FunFam" id="2.170.260.10:FF:000002">
    <property type="entry name" value="Putative Endoribonuclease Dicer"/>
    <property type="match status" value="1"/>
</dbReference>
<dbReference type="FunFam" id="1.10.1520.10:FF:000005">
    <property type="entry name" value="Putative endoribonuclease dicer"/>
    <property type="match status" value="1"/>
</dbReference>
<dbReference type="Gene3D" id="3.30.160.20">
    <property type="match status" value="1"/>
</dbReference>
<dbReference type="Gene3D" id="3.30.160.380">
    <property type="entry name" value="Dicer dimerisation domain"/>
    <property type="match status" value="1"/>
</dbReference>
<dbReference type="Gene3D" id="3.40.50.300">
    <property type="entry name" value="P-loop containing nucleotide triphosphate hydrolases"/>
    <property type="match status" value="2"/>
</dbReference>
<dbReference type="Gene3D" id="2.170.260.10">
    <property type="entry name" value="paz domain"/>
    <property type="match status" value="1"/>
</dbReference>
<dbReference type="Gene3D" id="1.10.1520.10">
    <property type="entry name" value="Ribonuclease III domain"/>
    <property type="match status" value="2"/>
</dbReference>
<dbReference type="InterPro" id="IPR011545">
    <property type="entry name" value="DEAD/DEAH_box_helicase_dom"/>
</dbReference>
<dbReference type="InterPro" id="IPR038248">
    <property type="entry name" value="Dicer_dimer_sf"/>
</dbReference>
<dbReference type="InterPro" id="IPR005034">
    <property type="entry name" value="Dicer_dimerisation_dom"/>
</dbReference>
<dbReference type="InterPro" id="IPR044441">
    <property type="entry name" value="DICER_DSRM"/>
</dbReference>
<dbReference type="InterPro" id="IPR048513">
    <property type="entry name" value="Dicer_PBD"/>
</dbReference>
<dbReference type="InterPro" id="IPR048512">
    <property type="entry name" value="Dicer_platform"/>
</dbReference>
<dbReference type="InterPro" id="IPR014720">
    <property type="entry name" value="dsRBD_dom"/>
</dbReference>
<dbReference type="InterPro" id="IPR014001">
    <property type="entry name" value="Helicase_ATP-bd"/>
</dbReference>
<dbReference type="InterPro" id="IPR001650">
    <property type="entry name" value="Helicase_C-like"/>
</dbReference>
<dbReference type="InterPro" id="IPR027417">
    <property type="entry name" value="P-loop_NTPase"/>
</dbReference>
<dbReference type="InterPro" id="IPR003100">
    <property type="entry name" value="PAZ_dom"/>
</dbReference>
<dbReference type="InterPro" id="IPR036085">
    <property type="entry name" value="PAZ_dom_sf"/>
</dbReference>
<dbReference type="InterPro" id="IPR000999">
    <property type="entry name" value="RNase_III_dom"/>
</dbReference>
<dbReference type="InterPro" id="IPR036389">
    <property type="entry name" value="RNase_III_sf"/>
</dbReference>
<dbReference type="PANTHER" id="PTHR14950">
    <property type="entry name" value="DICER-RELATED"/>
    <property type="match status" value="1"/>
</dbReference>
<dbReference type="PANTHER" id="PTHR14950:SF37">
    <property type="entry name" value="ENDORIBONUCLEASE DICER"/>
    <property type="match status" value="1"/>
</dbReference>
<dbReference type="Pfam" id="PF00270">
    <property type="entry name" value="DEAD"/>
    <property type="match status" value="1"/>
</dbReference>
<dbReference type="Pfam" id="PF03368">
    <property type="entry name" value="Dicer_dimer"/>
    <property type="match status" value="1"/>
</dbReference>
<dbReference type="Pfam" id="PF20932">
    <property type="entry name" value="Dicer_dsRBD"/>
    <property type="match status" value="1"/>
</dbReference>
<dbReference type="Pfam" id="PF20930">
    <property type="entry name" value="Dicer_PBD"/>
    <property type="match status" value="1"/>
</dbReference>
<dbReference type="Pfam" id="PF20931">
    <property type="entry name" value="Dicer_platform"/>
    <property type="match status" value="1"/>
</dbReference>
<dbReference type="Pfam" id="PF00271">
    <property type="entry name" value="Helicase_C"/>
    <property type="match status" value="1"/>
</dbReference>
<dbReference type="Pfam" id="PF02170">
    <property type="entry name" value="PAZ"/>
    <property type="match status" value="1"/>
</dbReference>
<dbReference type="Pfam" id="PF00636">
    <property type="entry name" value="Ribonuclease_3"/>
    <property type="match status" value="2"/>
</dbReference>
<dbReference type="SMART" id="SM00487">
    <property type="entry name" value="DEXDc"/>
    <property type="match status" value="1"/>
</dbReference>
<dbReference type="SMART" id="SM00358">
    <property type="entry name" value="DSRM"/>
    <property type="match status" value="1"/>
</dbReference>
<dbReference type="SMART" id="SM00490">
    <property type="entry name" value="HELICc"/>
    <property type="match status" value="1"/>
</dbReference>
<dbReference type="SMART" id="SM00949">
    <property type="entry name" value="PAZ"/>
    <property type="match status" value="1"/>
</dbReference>
<dbReference type="SMART" id="SM00535">
    <property type="entry name" value="RIBOc"/>
    <property type="match status" value="2"/>
</dbReference>
<dbReference type="SUPFAM" id="SSF54768">
    <property type="entry name" value="dsRNA-binding domain-like"/>
    <property type="match status" value="1"/>
</dbReference>
<dbReference type="SUPFAM" id="SSF52540">
    <property type="entry name" value="P-loop containing nucleoside triphosphate hydrolases"/>
    <property type="match status" value="1"/>
</dbReference>
<dbReference type="SUPFAM" id="SSF101690">
    <property type="entry name" value="PAZ domain"/>
    <property type="match status" value="1"/>
</dbReference>
<dbReference type="SUPFAM" id="SSF69065">
    <property type="entry name" value="RNase III domain-like"/>
    <property type="match status" value="2"/>
</dbReference>
<dbReference type="PROSITE" id="PS51327">
    <property type="entry name" value="DICER_DSRBF"/>
    <property type="match status" value="1"/>
</dbReference>
<dbReference type="PROSITE" id="PS50137">
    <property type="entry name" value="DS_RBD"/>
    <property type="match status" value="1"/>
</dbReference>
<dbReference type="PROSITE" id="PS51192">
    <property type="entry name" value="HELICASE_ATP_BIND_1"/>
    <property type="match status" value="1"/>
</dbReference>
<dbReference type="PROSITE" id="PS51194">
    <property type="entry name" value="HELICASE_CTER"/>
    <property type="match status" value="1"/>
</dbReference>
<dbReference type="PROSITE" id="PS50821">
    <property type="entry name" value="PAZ"/>
    <property type="match status" value="1"/>
</dbReference>
<dbReference type="PROSITE" id="PS00517">
    <property type="entry name" value="RNASE_3_1"/>
    <property type="match status" value="1"/>
</dbReference>
<dbReference type="PROSITE" id="PS50142">
    <property type="entry name" value="RNASE_3_2"/>
    <property type="match status" value="2"/>
</dbReference>
<evidence type="ECO:0000250" key="1"/>
<evidence type="ECO:0000250" key="2">
    <source>
        <dbReference type="UniProtKB" id="Q8R418"/>
    </source>
</evidence>
<evidence type="ECO:0000250" key="3">
    <source>
        <dbReference type="UniProtKB" id="Q9UPY3"/>
    </source>
</evidence>
<evidence type="ECO:0000255" key="4">
    <source>
        <dbReference type="PROSITE-ProRule" id="PRU00142"/>
    </source>
</evidence>
<evidence type="ECO:0000255" key="5">
    <source>
        <dbReference type="PROSITE-ProRule" id="PRU00177"/>
    </source>
</evidence>
<evidence type="ECO:0000255" key="6">
    <source>
        <dbReference type="PROSITE-ProRule" id="PRU00266"/>
    </source>
</evidence>
<evidence type="ECO:0000255" key="7">
    <source>
        <dbReference type="PROSITE-ProRule" id="PRU00541"/>
    </source>
</evidence>
<evidence type="ECO:0000255" key="8">
    <source>
        <dbReference type="PROSITE-ProRule" id="PRU00542"/>
    </source>
</evidence>
<evidence type="ECO:0000255" key="9">
    <source>
        <dbReference type="PROSITE-ProRule" id="PRU00657"/>
    </source>
</evidence>
<evidence type="ECO:0000256" key="10">
    <source>
        <dbReference type="SAM" id="MobiDB-lite"/>
    </source>
</evidence>
<evidence type="ECO:0000305" key="11"/>
<reference key="1">
    <citation type="submission" date="2003-09" db="EMBL/GenBank/DDBJ databases">
        <title>Overexpression of bovine Dicer in mammalian cells.</title>
        <authorList>
            <person name="Golding M.C."/>
            <person name="Long C.R."/>
            <person name="Westhusin M.E."/>
        </authorList>
    </citation>
    <scope>NUCLEOTIDE SEQUENCE [MRNA]</scope>
</reference>
<organism>
    <name type="scientific">Bos taurus</name>
    <name type="common">Bovine</name>
    <dbReference type="NCBI Taxonomy" id="9913"/>
    <lineage>
        <taxon>Eukaryota</taxon>
        <taxon>Metazoa</taxon>
        <taxon>Chordata</taxon>
        <taxon>Craniata</taxon>
        <taxon>Vertebrata</taxon>
        <taxon>Euteleostomi</taxon>
        <taxon>Mammalia</taxon>
        <taxon>Eutheria</taxon>
        <taxon>Laurasiatheria</taxon>
        <taxon>Artiodactyla</taxon>
        <taxon>Ruminantia</taxon>
        <taxon>Pecora</taxon>
        <taxon>Bovidae</taxon>
        <taxon>Bovinae</taxon>
        <taxon>Bos</taxon>
    </lineage>
</organism>
<gene>
    <name type="primary">DICER1</name>
    <name type="synonym">DICER</name>
</gene>